<protein>
    <recommendedName>
        <fullName evidence="1">Probable endonuclease 4</fullName>
        <ecNumber evidence="1">3.1.21.2</ecNumber>
    </recommendedName>
    <alternativeName>
        <fullName evidence="1">Endodeoxyribonuclease IV</fullName>
    </alternativeName>
    <alternativeName>
        <fullName evidence="1">Endonuclease IV</fullName>
    </alternativeName>
</protein>
<name>END4_PROMH</name>
<comment type="function">
    <text evidence="1">Endonuclease IV plays a role in DNA repair. It cleaves phosphodiester bonds at apurinic or apyrimidinic (AP) sites, generating a 3'-hydroxyl group and a 5'-terminal sugar phosphate.</text>
</comment>
<comment type="catalytic activity">
    <reaction evidence="1">
        <text>Endonucleolytic cleavage to 5'-phosphooligonucleotide end-products.</text>
        <dbReference type="EC" id="3.1.21.2"/>
    </reaction>
</comment>
<comment type="cofactor">
    <cofactor evidence="1">
        <name>Zn(2+)</name>
        <dbReference type="ChEBI" id="CHEBI:29105"/>
    </cofactor>
    <text evidence="1">Binds 3 Zn(2+) ions.</text>
</comment>
<comment type="similarity">
    <text evidence="1">Belongs to the AP endonuclease 2 family.</text>
</comment>
<accession>B4ETA5</accession>
<dbReference type="EC" id="3.1.21.2" evidence="1"/>
<dbReference type="EMBL" id="AM942759">
    <property type="protein sequence ID" value="CAR41906.1"/>
    <property type="molecule type" value="Genomic_DNA"/>
</dbReference>
<dbReference type="RefSeq" id="WP_012367755.1">
    <property type="nucleotide sequence ID" value="NC_010554.1"/>
</dbReference>
<dbReference type="SMR" id="B4ETA5"/>
<dbReference type="EnsemblBacteria" id="CAR41906">
    <property type="protein sequence ID" value="CAR41906"/>
    <property type="gene ID" value="PMI0838"/>
</dbReference>
<dbReference type="GeneID" id="6801845"/>
<dbReference type="KEGG" id="pmr:PMI0838"/>
<dbReference type="PATRIC" id="fig|529507.6.peg.816"/>
<dbReference type="eggNOG" id="COG0648">
    <property type="taxonomic scope" value="Bacteria"/>
</dbReference>
<dbReference type="HOGENOM" id="CLU_025885_0_4_6"/>
<dbReference type="Proteomes" id="UP000008319">
    <property type="component" value="Chromosome"/>
</dbReference>
<dbReference type="GO" id="GO:0008833">
    <property type="term" value="F:deoxyribonuclease IV (phage-T4-induced) activity"/>
    <property type="evidence" value="ECO:0007669"/>
    <property type="project" value="UniProtKB-UniRule"/>
</dbReference>
<dbReference type="GO" id="GO:0003677">
    <property type="term" value="F:DNA binding"/>
    <property type="evidence" value="ECO:0007669"/>
    <property type="project" value="InterPro"/>
</dbReference>
<dbReference type="GO" id="GO:0003906">
    <property type="term" value="F:DNA-(apurinic or apyrimidinic site) endonuclease activity"/>
    <property type="evidence" value="ECO:0007669"/>
    <property type="project" value="TreeGrafter"/>
</dbReference>
<dbReference type="GO" id="GO:0008081">
    <property type="term" value="F:phosphoric diester hydrolase activity"/>
    <property type="evidence" value="ECO:0007669"/>
    <property type="project" value="TreeGrafter"/>
</dbReference>
<dbReference type="GO" id="GO:0008270">
    <property type="term" value="F:zinc ion binding"/>
    <property type="evidence" value="ECO:0007669"/>
    <property type="project" value="UniProtKB-UniRule"/>
</dbReference>
<dbReference type="GO" id="GO:0006284">
    <property type="term" value="P:base-excision repair"/>
    <property type="evidence" value="ECO:0007669"/>
    <property type="project" value="TreeGrafter"/>
</dbReference>
<dbReference type="CDD" id="cd00019">
    <property type="entry name" value="AP2Ec"/>
    <property type="match status" value="1"/>
</dbReference>
<dbReference type="FunFam" id="3.20.20.150:FF:000001">
    <property type="entry name" value="Probable endonuclease 4"/>
    <property type="match status" value="1"/>
</dbReference>
<dbReference type="Gene3D" id="3.20.20.150">
    <property type="entry name" value="Divalent-metal-dependent TIM barrel enzymes"/>
    <property type="match status" value="1"/>
</dbReference>
<dbReference type="HAMAP" id="MF_00152">
    <property type="entry name" value="Nfo"/>
    <property type="match status" value="1"/>
</dbReference>
<dbReference type="InterPro" id="IPR001719">
    <property type="entry name" value="AP_endonuc_2"/>
</dbReference>
<dbReference type="InterPro" id="IPR018246">
    <property type="entry name" value="AP_endonuc_F2_Zn_BS"/>
</dbReference>
<dbReference type="InterPro" id="IPR036237">
    <property type="entry name" value="Xyl_isomerase-like_sf"/>
</dbReference>
<dbReference type="InterPro" id="IPR013022">
    <property type="entry name" value="Xyl_isomerase-like_TIM-brl"/>
</dbReference>
<dbReference type="NCBIfam" id="TIGR00587">
    <property type="entry name" value="nfo"/>
    <property type="match status" value="1"/>
</dbReference>
<dbReference type="NCBIfam" id="NF002199">
    <property type="entry name" value="PRK01060.1-4"/>
    <property type="match status" value="1"/>
</dbReference>
<dbReference type="PANTHER" id="PTHR21445:SF0">
    <property type="entry name" value="APURINIC-APYRIMIDINIC ENDONUCLEASE"/>
    <property type="match status" value="1"/>
</dbReference>
<dbReference type="PANTHER" id="PTHR21445">
    <property type="entry name" value="ENDONUCLEASE IV ENDODEOXYRIBONUCLEASE IV"/>
    <property type="match status" value="1"/>
</dbReference>
<dbReference type="Pfam" id="PF01261">
    <property type="entry name" value="AP_endonuc_2"/>
    <property type="match status" value="1"/>
</dbReference>
<dbReference type="SMART" id="SM00518">
    <property type="entry name" value="AP2Ec"/>
    <property type="match status" value="1"/>
</dbReference>
<dbReference type="SUPFAM" id="SSF51658">
    <property type="entry name" value="Xylose isomerase-like"/>
    <property type="match status" value="1"/>
</dbReference>
<dbReference type="PROSITE" id="PS00729">
    <property type="entry name" value="AP_NUCLEASE_F2_1"/>
    <property type="match status" value="1"/>
</dbReference>
<dbReference type="PROSITE" id="PS00730">
    <property type="entry name" value="AP_NUCLEASE_F2_2"/>
    <property type="match status" value="1"/>
</dbReference>
<dbReference type="PROSITE" id="PS00731">
    <property type="entry name" value="AP_NUCLEASE_F2_3"/>
    <property type="match status" value="1"/>
</dbReference>
<dbReference type="PROSITE" id="PS51432">
    <property type="entry name" value="AP_NUCLEASE_F2_4"/>
    <property type="match status" value="1"/>
</dbReference>
<organism>
    <name type="scientific">Proteus mirabilis (strain HI4320)</name>
    <dbReference type="NCBI Taxonomy" id="529507"/>
    <lineage>
        <taxon>Bacteria</taxon>
        <taxon>Pseudomonadati</taxon>
        <taxon>Pseudomonadota</taxon>
        <taxon>Gammaproteobacteria</taxon>
        <taxon>Enterobacterales</taxon>
        <taxon>Morganellaceae</taxon>
        <taxon>Proteus</taxon>
    </lineage>
</organism>
<evidence type="ECO:0000255" key="1">
    <source>
        <dbReference type="HAMAP-Rule" id="MF_00152"/>
    </source>
</evidence>
<feature type="chain" id="PRO_1000096897" description="Probable endonuclease 4">
    <location>
        <begin position="1"/>
        <end position="281"/>
    </location>
</feature>
<feature type="binding site" evidence="1">
    <location>
        <position position="69"/>
    </location>
    <ligand>
        <name>Zn(2+)</name>
        <dbReference type="ChEBI" id="CHEBI:29105"/>
        <label>1</label>
    </ligand>
</feature>
<feature type="binding site" evidence="1">
    <location>
        <position position="109"/>
    </location>
    <ligand>
        <name>Zn(2+)</name>
        <dbReference type="ChEBI" id="CHEBI:29105"/>
        <label>1</label>
    </ligand>
</feature>
<feature type="binding site" evidence="1">
    <location>
        <position position="145"/>
    </location>
    <ligand>
        <name>Zn(2+)</name>
        <dbReference type="ChEBI" id="CHEBI:29105"/>
        <label>1</label>
    </ligand>
</feature>
<feature type="binding site" evidence="1">
    <location>
        <position position="145"/>
    </location>
    <ligand>
        <name>Zn(2+)</name>
        <dbReference type="ChEBI" id="CHEBI:29105"/>
        <label>2</label>
    </ligand>
</feature>
<feature type="binding site" evidence="1">
    <location>
        <position position="179"/>
    </location>
    <ligand>
        <name>Zn(2+)</name>
        <dbReference type="ChEBI" id="CHEBI:29105"/>
        <label>2</label>
    </ligand>
</feature>
<feature type="binding site" evidence="1">
    <location>
        <position position="182"/>
    </location>
    <ligand>
        <name>Zn(2+)</name>
        <dbReference type="ChEBI" id="CHEBI:29105"/>
        <label>3</label>
    </ligand>
</feature>
<feature type="binding site" evidence="1">
    <location>
        <position position="216"/>
    </location>
    <ligand>
        <name>Zn(2+)</name>
        <dbReference type="ChEBI" id="CHEBI:29105"/>
        <label>2</label>
    </ligand>
</feature>
<feature type="binding site" evidence="1">
    <location>
        <position position="229"/>
    </location>
    <ligand>
        <name>Zn(2+)</name>
        <dbReference type="ChEBI" id="CHEBI:29105"/>
        <label>3</label>
    </ligand>
</feature>
<feature type="binding site" evidence="1">
    <location>
        <position position="231"/>
    </location>
    <ligand>
        <name>Zn(2+)</name>
        <dbReference type="ChEBI" id="CHEBI:29105"/>
        <label>3</label>
    </ligand>
</feature>
<feature type="binding site" evidence="1">
    <location>
        <position position="261"/>
    </location>
    <ligand>
        <name>Zn(2+)</name>
        <dbReference type="ChEBI" id="CHEBI:29105"/>
        <label>2</label>
    </ligand>
</feature>
<sequence length="281" mass="31458">MKFVGAHVSAAGGVDQAVLRAHEIKATAFALFTKNQRQWKAAPLSTESIDKFKKNCEIYGYGPAQILPHDSYLINLGHPEEEALEKSRAAFLDEMQRCEQLGIELLNFHPGSHLKKIDVDKCLQRIAESINITLDKTQNVTAVIENTAGQGTNLGYRFEHLAAIIDGVEDKSRVGVCIDTCHTFAAGYDLRTVEDCEKTFAEFDNIVGFQYLKAMHLNDAKSELASRVDRHHSLGQGNIGKVPFTYIMQDIRFDGIPLILETINPDIWPEEIAWLKSQQTQ</sequence>
<reference key="1">
    <citation type="journal article" date="2008" name="J. Bacteriol.">
        <title>Complete genome sequence of uropathogenic Proteus mirabilis, a master of both adherence and motility.</title>
        <authorList>
            <person name="Pearson M.M."/>
            <person name="Sebaihia M."/>
            <person name="Churcher C."/>
            <person name="Quail M.A."/>
            <person name="Seshasayee A.S."/>
            <person name="Luscombe N.M."/>
            <person name="Abdellah Z."/>
            <person name="Arrosmith C."/>
            <person name="Atkin B."/>
            <person name="Chillingworth T."/>
            <person name="Hauser H."/>
            <person name="Jagels K."/>
            <person name="Moule S."/>
            <person name="Mungall K."/>
            <person name="Norbertczak H."/>
            <person name="Rabbinowitsch E."/>
            <person name="Walker D."/>
            <person name="Whithead S."/>
            <person name="Thomson N.R."/>
            <person name="Rather P.N."/>
            <person name="Parkhill J."/>
            <person name="Mobley H.L.T."/>
        </authorList>
    </citation>
    <scope>NUCLEOTIDE SEQUENCE [LARGE SCALE GENOMIC DNA]</scope>
    <source>
        <strain>HI4320</strain>
    </source>
</reference>
<gene>
    <name evidence="1" type="primary">nfo</name>
    <name type="ordered locus">PMI0838</name>
</gene>
<keyword id="KW-0227">DNA damage</keyword>
<keyword id="KW-0234">DNA repair</keyword>
<keyword id="KW-0255">Endonuclease</keyword>
<keyword id="KW-0378">Hydrolase</keyword>
<keyword id="KW-0479">Metal-binding</keyword>
<keyword id="KW-0540">Nuclease</keyword>
<keyword id="KW-1185">Reference proteome</keyword>
<keyword id="KW-0862">Zinc</keyword>
<proteinExistence type="inferred from homology"/>